<protein>
    <recommendedName>
        <fullName>GTPase RhebL1</fullName>
        <ecNumber evidence="2">3.6.5.-</ecNumber>
    </recommendedName>
    <alternativeName>
        <fullName>Ras homolog enriched in brain-like protein 1</fullName>
        <shortName>Rheb-like protein 1</shortName>
    </alternativeName>
</protein>
<feature type="chain" id="PRO_0000324294" description="GTPase RhebL1">
    <location>
        <begin position="1"/>
        <end position="181"/>
    </location>
</feature>
<feature type="propeptide" id="PRO_0000324295" description="Removed in mature form" evidence="1">
    <location>
        <begin position="182"/>
        <end position="184"/>
    </location>
</feature>
<feature type="short sequence motif" description="Effector region">
    <location>
        <begin position="35"/>
        <end position="43"/>
    </location>
</feature>
<feature type="binding site" evidence="2">
    <location>
        <begin position="16"/>
        <end position="21"/>
    </location>
    <ligand>
        <name>GTP</name>
        <dbReference type="ChEBI" id="CHEBI:37565"/>
    </ligand>
</feature>
<feature type="binding site" evidence="2">
    <location>
        <begin position="32"/>
        <end position="38"/>
    </location>
    <ligand>
        <name>GTP</name>
        <dbReference type="ChEBI" id="CHEBI:37565"/>
    </ligand>
</feature>
<feature type="binding site" evidence="2">
    <location>
        <position position="38"/>
    </location>
    <ligand>
        <name>Mg(2+)</name>
        <dbReference type="ChEBI" id="CHEBI:18420"/>
    </ligand>
</feature>
<feature type="binding site" evidence="3">
    <location>
        <position position="63"/>
    </location>
    <ligand>
        <name>GTP</name>
        <dbReference type="ChEBI" id="CHEBI:37565"/>
    </ligand>
</feature>
<feature type="binding site" evidence="2">
    <location>
        <begin position="119"/>
        <end position="122"/>
    </location>
    <ligand>
        <name>GTP</name>
        <dbReference type="ChEBI" id="CHEBI:37565"/>
    </ligand>
</feature>
<feature type="binding site" evidence="2">
    <location>
        <begin position="149"/>
        <end position="150"/>
    </location>
    <ligand>
        <name>GTP</name>
        <dbReference type="ChEBI" id="CHEBI:37565"/>
    </ligand>
</feature>
<feature type="modified residue" description="Cysteine methyl ester" evidence="1">
    <location>
        <position position="181"/>
    </location>
</feature>
<feature type="lipid moiety-binding region" description="S-farnesyl cysteine" evidence="1">
    <location>
        <position position="181"/>
    </location>
</feature>
<organism>
    <name type="scientific">Mus musculus</name>
    <name type="common">Mouse</name>
    <dbReference type="NCBI Taxonomy" id="10090"/>
    <lineage>
        <taxon>Eukaryota</taxon>
        <taxon>Metazoa</taxon>
        <taxon>Chordata</taxon>
        <taxon>Craniata</taxon>
        <taxon>Vertebrata</taxon>
        <taxon>Euteleostomi</taxon>
        <taxon>Mammalia</taxon>
        <taxon>Eutheria</taxon>
        <taxon>Euarchontoglires</taxon>
        <taxon>Glires</taxon>
        <taxon>Rodentia</taxon>
        <taxon>Myomorpha</taxon>
        <taxon>Muroidea</taxon>
        <taxon>Muridae</taxon>
        <taxon>Murinae</taxon>
        <taxon>Mus</taxon>
        <taxon>Mus</taxon>
    </lineage>
</organism>
<sequence length="184" mass="20934">MPLVRYRKVAILGYRSVGKTSLAHQFVEGEFLEGYDPTVENTYSKTVTLGKDEFHLHLVDTAGQDEYSILPYSLIIGVHGYVLVYSVNSLRSFQIVKNLYQKLHEGHGKTRLSVLLVGNKADLSPEREVQAVEGKKLAESWGAMFMESSARDNQLTQDVFIKVIQEIARVENSYGRQDRRCYLM</sequence>
<name>REBL1_MOUSE</name>
<reference key="1">
    <citation type="journal article" date="2005" name="Mol. Biol. Rep.">
        <title>Identification and characterization of RHEBL1, a novel member of Ras family, which activates transcriptional activities of NF-kappa B.</title>
        <authorList>
            <person name="Yuan J."/>
            <person name="Shan Y."/>
            <person name="Chen X."/>
            <person name="Tang W."/>
            <person name="Luo K."/>
            <person name="Ni J."/>
            <person name="Wan B."/>
            <person name="Yu L."/>
        </authorList>
    </citation>
    <scope>NUCLEOTIDE SEQUENCE [MRNA]</scope>
    <source>
        <strain>C57BL/6J</strain>
        <tissue>Retina</tissue>
    </source>
</reference>
<reference key="2">
    <citation type="journal article" date="2005" name="Science">
        <title>The transcriptional landscape of the mammalian genome.</title>
        <authorList>
            <person name="Carninci P."/>
            <person name="Kasukawa T."/>
            <person name="Katayama S."/>
            <person name="Gough J."/>
            <person name="Frith M.C."/>
            <person name="Maeda N."/>
            <person name="Oyama R."/>
            <person name="Ravasi T."/>
            <person name="Lenhard B."/>
            <person name="Wells C."/>
            <person name="Kodzius R."/>
            <person name="Shimokawa K."/>
            <person name="Bajic V.B."/>
            <person name="Brenner S.E."/>
            <person name="Batalov S."/>
            <person name="Forrest A.R."/>
            <person name="Zavolan M."/>
            <person name="Davis M.J."/>
            <person name="Wilming L.G."/>
            <person name="Aidinis V."/>
            <person name="Allen J.E."/>
            <person name="Ambesi-Impiombato A."/>
            <person name="Apweiler R."/>
            <person name="Aturaliya R.N."/>
            <person name="Bailey T.L."/>
            <person name="Bansal M."/>
            <person name="Baxter L."/>
            <person name="Beisel K.W."/>
            <person name="Bersano T."/>
            <person name="Bono H."/>
            <person name="Chalk A.M."/>
            <person name="Chiu K.P."/>
            <person name="Choudhary V."/>
            <person name="Christoffels A."/>
            <person name="Clutterbuck D.R."/>
            <person name="Crowe M.L."/>
            <person name="Dalla E."/>
            <person name="Dalrymple B.P."/>
            <person name="de Bono B."/>
            <person name="Della Gatta G."/>
            <person name="di Bernardo D."/>
            <person name="Down T."/>
            <person name="Engstrom P."/>
            <person name="Fagiolini M."/>
            <person name="Faulkner G."/>
            <person name="Fletcher C.F."/>
            <person name="Fukushima T."/>
            <person name="Furuno M."/>
            <person name="Futaki S."/>
            <person name="Gariboldi M."/>
            <person name="Georgii-Hemming P."/>
            <person name="Gingeras T.R."/>
            <person name="Gojobori T."/>
            <person name="Green R.E."/>
            <person name="Gustincich S."/>
            <person name="Harbers M."/>
            <person name="Hayashi Y."/>
            <person name="Hensch T.K."/>
            <person name="Hirokawa N."/>
            <person name="Hill D."/>
            <person name="Huminiecki L."/>
            <person name="Iacono M."/>
            <person name="Ikeo K."/>
            <person name="Iwama A."/>
            <person name="Ishikawa T."/>
            <person name="Jakt M."/>
            <person name="Kanapin A."/>
            <person name="Katoh M."/>
            <person name="Kawasawa Y."/>
            <person name="Kelso J."/>
            <person name="Kitamura H."/>
            <person name="Kitano H."/>
            <person name="Kollias G."/>
            <person name="Krishnan S.P."/>
            <person name="Kruger A."/>
            <person name="Kummerfeld S.K."/>
            <person name="Kurochkin I.V."/>
            <person name="Lareau L.F."/>
            <person name="Lazarevic D."/>
            <person name="Lipovich L."/>
            <person name="Liu J."/>
            <person name="Liuni S."/>
            <person name="McWilliam S."/>
            <person name="Madan Babu M."/>
            <person name="Madera M."/>
            <person name="Marchionni L."/>
            <person name="Matsuda H."/>
            <person name="Matsuzawa S."/>
            <person name="Miki H."/>
            <person name="Mignone F."/>
            <person name="Miyake S."/>
            <person name="Morris K."/>
            <person name="Mottagui-Tabar S."/>
            <person name="Mulder N."/>
            <person name="Nakano N."/>
            <person name="Nakauchi H."/>
            <person name="Ng P."/>
            <person name="Nilsson R."/>
            <person name="Nishiguchi S."/>
            <person name="Nishikawa S."/>
            <person name="Nori F."/>
            <person name="Ohara O."/>
            <person name="Okazaki Y."/>
            <person name="Orlando V."/>
            <person name="Pang K.C."/>
            <person name="Pavan W.J."/>
            <person name="Pavesi G."/>
            <person name="Pesole G."/>
            <person name="Petrovsky N."/>
            <person name="Piazza S."/>
            <person name="Reed J."/>
            <person name="Reid J.F."/>
            <person name="Ring B.Z."/>
            <person name="Ringwald M."/>
            <person name="Rost B."/>
            <person name="Ruan Y."/>
            <person name="Salzberg S.L."/>
            <person name="Sandelin A."/>
            <person name="Schneider C."/>
            <person name="Schoenbach C."/>
            <person name="Sekiguchi K."/>
            <person name="Semple C.A."/>
            <person name="Seno S."/>
            <person name="Sessa L."/>
            <person name="Sheng Y."/>
            <person name="Shibata Y."/>
            <person name="Shimada H."/>
            <person name="Shimada K."/>
            <person name="Silva D."/>
            <person name="Sinclair B."/>
            <person name="Sperling S."/>
            <person name="Stupka E."/>
            <person name="Sugiura K."/>
            <person name="Sultana R."/>
            <person name="Takenaka Y."/>
            <person name="Taki K."/>
            <person name="Tammoja K."/>
            <person name="Tan S.L."/>
            <person name="Tang S."/>
            <person name="Taylor M.S."/>
            <person name="Tegner J."/>
            <person name="Teichmann S.A."/>
            <person name="Ueda H.R."/>
            <person name="van Nimwegen E."/>
            <person name="Verardo R."/>
            <person name="Wei C.L."/>
            <person name="Yagi K."/>
            <person name="Yamanishi H."/>
            <person name="Zabarovsky E."/>
            <person name="Zhu S."/>
            <person name="Zimmer A."/>
            <person name="Hide W."/>
            <person name="Bult C."/>
            <person name="Grimmond S.M."/>
            <person name="Teasdale R.D."/>
            <person name="Liu E.T."/>
            <person name="Brusic V."/>
            <person name="Quackenbush J."/>
            <person name="Wahlestedt C."/>
            <person name="Mattick J.S."/>
            <person name="Hume D.A."/>
            <person name="Kai C."/>
            <person name="Sasaki D."/>
            <person name="Tomaru Y."/>
            <person name="Fukuda S."/>
            <person name="Kanamori-Katayama M."/>
            <person name="Suzuki M."/>
            <person name="Aoki J."/>
            <person name="Arakawa T."/>
            <person name="Iida J."/>
            <person name="Imamura K."/>
            <person name="Itoh M."/>
            <person name="Kato T."/>
            <person name="Kawaji H."/>
            <person name="Kawagashira N."/>
            <person name="Kawashima T."/>
            <person name="Kojima M."/>
            <person name="Kondo S."/>
            <person name="Konno H."/>
            <person name="Nakano K."/>
            <person name="Ninomiya N."/>
            <person name="Nishio T."/>
            <person name="Okada M."/>
            <person name="Plessy C."/>
            <person name="Shibata K."/>
            <person name="Shiraki T."/>
            <person name="Suzuki S."/>
            <person name="Tagami M."/>
            <person name="Waki K."/>
            <person name="Watahiki A."/>
            <person name="Okamura-Oho Y."/>
            <person name="Suzuki H."/>
            <person name="Kawai J."/>
            <person name="Hayashizaki Y."/>
        </authorList>
    </citation>
    <scope>NUCLEOTIDE SEQUENCE [LARGE SCALE MRNA]</scope>
    <source>
        <strain>C57BL/6J</strain>
        <tissue>Pancreas</tissue>
    </source>
</reference>
<reference key="3">
    <citation type="journal article" date="2004" name="Genome Res.">
        <title>The status, quality, and expansion of the NIH full-length cDNA project: the Mammalian Gene Collection (MGC).</title>
        <authorList>
            <consortium name="The MGC Project Team"/>
        </authorList>
    </citation>
    <scope>NUCLEOTIDE SEQUENCE [LARGE SCALE MRNA]</scope>
    <source>
        <strain>C57BL/6J</strain>
        <strain>FVB/N</strain>
        <tissue>Mammary tumor</tissue>
    </source>
</reference>
<proteinExistence type="evidence at transcript level"/>
<evidence type="ECO:0000250" key="1"/>
<evidence type="ECO:0000250" key="2">
    <source>
        <dbReference type="UniProtKB" id="Q15382"/>
    </source>
</evidence>
<evidence type="ECO:0000250" key="3">
    <source>
        <dbReference type="UniProtKB" id="Q8TAI7"/>
    </source>
</evidence>
<evidence type="ECO:0000305" key="4"/>
<gene>
    <name type="primary">Rhebl1</name>
</gene>
<comment type="function">
    <text evidence="2 3">Binds GTP and exhibits intrinsic GTPase activity. May activate NF-kappa-B-mediated gene transcription. Promotes signal transduction through MTOR, activates RPS6KB1, and is a downstream target of the small GTPase-activating proteins TSC1 and TSC2 (By similarity).</text>
</comment>
<comment type="catalytic activity">
    <reaction evidence="2">
        <text>GTP + H2O = GDP + phosphate + H(+)</text>
        <dbReference type="Rhea" id="RHEA:19669"/>
        <dbReference type="ChEBI" id="CHEBI:15377"/>
        <dbReference type="ChEBI" id="CHEBI:15378"/>
        <dbReference type="ChEBI" id="CHEBI:37565"/>
        <dbReference type="ChEBI" id="CHEBI:43474"/>
        <dbReference type="ChEBI" id="CHEBI:58189"/>
    </reaction>
    <physiologicalReaction direction="left-to-right" evidence="2">
        <dbReference type="Rhea" id="RHEA:19670"/>
    </physiologicalReaction>
</comment>
<comment type="subunit">
    <text evidence="3">Interacts with MTOR.</text>
</comment>
<comment type="subcellular location">
    <subcellularLocation>
        <location evidence="3">Endomembrane system</location>
        <topology evidence="3">Lipid-anchor</topology>
        <orientation evidence="3">Cytoplasmic side</orientation>
    </subcellularLocation>
    <subcellularLocation>
        <location evidence="3">Cytoplasm</location>
    </subcellularLocation>
</comment>
<comment type="similarity">
    <text evidence="4">Belongs to the small GTPase superfamily. Rheb family.</text>
</comment>
<keyword id="KW-0963">Cytoplasm</keyword>
<keyword id="KW-0342">GTP-binding</keyword>
<keyword id="KW-0378">Hydrolase</keyword>
<keyword id="KW-0449">Lipoprotein</keyword>
<keyword id="KW-0460">Magnesium</keyword>
<keyword id="KW-0472">Membrane</keyword>
<keyword id="KW-0479">Metal-binding</keyword>
<keyword id="KW-0488">Methylation</keyword>
<keyword id="KW-0547">Nucleotide-binding</keyword>
<keyword id="KW-0636">Prenylation</keyword>
<keyword id="KW-1185">Reference proteome</keyword>
<dbReference type="EC" id="3.6.5.-" evidence="2"/>
<dbReference type="EMBL" id="AY327413">
    <property type="protein sequence ID" value="AAP92805.1"/>
    <property type="molecule type" value="mRNA"/>
</dbReference>
<dbReference type="EMBL" id="AK007708">
    <property type="protein sequence ID" value="BAB25203.1"/>
    <property type="molecule type" value="mRNA"/>
</dbReference>
<dbReference type="EMBL" id="AK135858">
    <property type="protein sequence ID" value="BAE22699.1"/>
    <property type="molecule type" value="mRNA"/>
</dbReference>
<dbReference type="EMBL" id="BC016521">
    <property type="protein sequence ID" value="AAH16521.1"/>
    <property type="molecule type" value="mRNA"/>
</dbReference>
<dbReference type="CCDS" id="CCDS27809.1"/>
<dbReference type="RefSeq" id="NP_081243.1">
    <property type="nucleotide sequence ID" value="NM_026967.5"/>
</dbReference>
<dbReference type="RefSeq" id="XP_030104599.1">
    <property type="nucleotide sequence ID" value="XM_030248739.2"/>
</dbReference>
<dbReference type="SMR" id="Q9D8T3"/>
<dbReference type="BioGRID" id="213261">
    <property type="interactions" value="7"/>
</dbReference>
<dbReference type="FunCoup" id="Q9D8T3">
    <property type="interactions" value="326"/>
</dbReference>
<dbReference type="MINT" id="Q9D8T3"/>
<dbReference type="STRING" id="10090.ENSMUSP00000024518"/>
<dbReference type="iPTMnet" id="Q9D8T3"/>
<dbReference type="PhosphoSitePlus" id="Q9D8T3"/>
<dbReference type="jPOST" id="Q9D8T3"/>
<dbReference type="PaxDb" id="10090-ENSMUSP00000024518"/>
<dbReference type="ProteomicsDB" id="254909"/>
<dbReference type="Antibodypedia" id="25823">
    <property type="antibodies" value="134 antibodies from 23 providers"/>
</dbReference>
<dbReference type="DNASU" id="69159"/>
<dbReference type="Ensembl" id="ENSMUST00000024518.11">
    <property type="protein sequence ID" value="ENSMUSP00000024518.10"/>
    <property type="gene ID" value="ENSMUSG00000023755.11"/>
</dbReference>
<dbReference type="GeneID" id="69159"/>
<dbReference type="KEGG" id="mmu:69159"/>
<dbReference type="UCSC" id="uc011zzb.1">
    <property type="organism name" value="mouse"/>
</dbReference>
<dbReference type="AGR" id="MGI:1916409"/>
<dbReference type="CTD" id="121268"/>
<dbReference type="MGI" id="MGI:1916409">
    <property type="gene designation" value="Rhebl1"/>
</dbReference>
<dbReference type="VEuPathDB" id="HostDB:ENSMUSG00000023755"/>
<dbReference type="eggNOG" id="KOG0395">
    <property type="taxonomic scope" value="Eukaryota"/>
</dbReference>
<dbReference type="GeneTree" id="ENSGT00940000161665"/>
<dbReference type="HOGENOM" id="CLU_041217_9_8_1"/>
<dbReference type="InParanoid" id="Q9D8T3"/>
<dbReference type="OMA" id="HQGHGKT"/>
<dbReference type="OrthoDB" id="25818at2759"/>
<dbReference type="PhylomeDB" id="Q9D8T3"/>
<dbReference type="TreeFam" id="TF314986"/>
<dbReference type="BioGRID-ORCS" id="69159">
    <property type="hits" value="4 hits in 78 CRISPR screens"/>
</dbReference>
<dbReference type="ChiTaRS" id="Rhebl1">
    <property type="organism name" value="mouse"/>
</dbReference>
<dbReference type="PRO" id="PR:Q9D8T3"/>
<dbReference type="Proteomes" id="UP000000589">
    <property type="component" value="Chromosome 15"/>
</dbReference>
<dbReference type="RNAct" id="Q9D8T3">
    <property type="molecule type" value="protein"/>
</dbReference>
<dbReference type="Bgee" id="ENSMUSG00000023755">
    <property type="expression patterns" value="Expressed in cleaving embryo and 223 other cell types or tissues"/>
</dbReference>
<dbReference type="ExpressionAtlas" id="Q9D8T3">
    <property type="expression patterns" value="baseline and differential"/>
</dbReference>
<dbReference type="GO" id="GO:0005737">
    <property type="term" value="C:cytoplasm"/>
    <property type="evidence" value="ECO:0007669"/>
    <property type="project" value="UniProtKB-SubCell"/>
</dbReference>
<dbReference type="GO" id="GO:0012505">
    <property type="term" value="C:endomembrane system"/>
    <property type="evidence" value="ECO:0007669"/>
    <property type="project" value="UniProtKB-SubCell"/>
</dbReference>
<dbReference type="GO" id="GO:0016020">
    <property type="term" value="C:membrane"/>
    <property type="evidence" value="ECO:0007669"/>
    <property type="project" value="UniProtKB-KW"/>
</dbReference>
<dbReference type="GO" id="GO:0005525">
    <property type="term" value="F:GTP binding"/>
    <property type="evidence" value="ECO:0007669"/>
    <property type="project" value="UniProtKB-KW"/>
</dbReference>
<dbReference type="GO" id="GO:0003924">
    <property type="term" value="F:GTPase activity"/>
    <property type="evidence" value="ECO:0007669"/>
    <property type="project" value="InterPro"/>
</dbReference>
<dbReference type="GO" id="GO:0046872">
    <property type="term" value="F:metal ion binding"/>
    <property type="evidence" value="ECO:0007669"/>
    <property type="project" value="UniProtKB-KW"/>
</dbReference>
<dbReference type="GO" id="GO:0031929">
    <property type="term" value="P:TOR signaling"/>
    <property type="evidence" value="ECO:0007669"/>
    <property type="project" value="Ensembl"/>
</dbReference>
<dbReference type="CDD" id="cd04137">
    <property type="entry name" value="RheB"/>
    <property type="match status" value="1"/>
</dbReference>
<dbReference type="FunFam" id="3.40.50.300:FF:000971">
    <property type="entry name" value="GTPase RhebL1 isoform X2"/>
    <property type="match status" value="1"/>
</dbReference>
<dbReference type="Gene3D" id="3.40.50.300">
    <property type="entry name" value="P-loop containing nucleotide triphosphate hydrolases"/>
    <property type="match status" value="1"/>
</dbReference>
<dbReference type="InterPro" id="IPR027417">
    <property type="entry name" value="P-loop_NTPase"/>
</dbReference>
<dbReference type="InterPro" id="IPR005225">
    <property type="entry name" value="Small_GTP-bd"/>
</dbReference>
<dbReference type="InterPro" id="IPR001806">
    <property type="entry name" value="Small_GTPase"/>
</dbReference>
<dbReference type="InterPro" id="IPR020849">
    <property type="entry name" value="Small_GTPase_Ras-type"/>
</dbReference>
<dbReference type="NCBIfam" id="TIGR00231">
    <property type="entry name" value="small_GTP"/>
    <property type="match status" value="1"/>
</dbReference>
<dbReference type="PANTHER" id="PTHR24070">
    <property type="entry name" value="RAS, DI-RAS, AND RHEB FAMILY MEMBERS OF SMALL GTPASE SUPERFAMILY"/>
    <property type="match status" value="1"/>
</dbReference>
<dbReference type="Pfam" id="PF00071">
    <property type="entry name" value="Ras"/>
    <property type="match status" value="1"/>
</dbReference>
<dbReference type="PRINTS" id="PR00449">
    <property type="entry name" value="RASTRNSFRMNG"/>
</dbReference>
<dbReference type="SMART" id="SM00175">
    <property type="entry name" value="RAB"/>
    <property type="match status" value="1"/>
</dbReference>
<dbReference type="SMART" id="SM00173">
    <property type="entry name" value="RAS"/>
    <property type="match status" value="1"/>
</dbReference>
<dbReference type="SMART" id="SM00174">
    <property type="entry name" value="RHO"/>
    <property type="match status" value="1"/>
</dbReference>
<dbReference type="SUPFAM" id="SSF52540">
    <property type="entry name" value="P-loop containing nucleoside triphosphate hydrolases"/>
    <property type="match status" value="1"/>
</dbReference>
<dbReference type="PROSITE" id="PS51421">
    <property type="entry name" value="RAS"/>
    <property type="match status" value="1"/>
</dbReference>
<accession>Q9D8T3</accession>